<keyword id="KW-0067">ATP-binding</keyword>
<keyword id="KW-0227">DNA damage</keyword>
<keyword id="KW-0234">DNA repair</keyword>
<keyword id="KW-0238">DNA-binding</keyword>
<keyword id="KW-0378">Hydrolase</keyword>
<keyword id="KW-0479">Metal-binding</keyword>
<keyword id="KW-0547">Nucleotide-binding</keyword>
<keyword id="KW-1185">Reference proteome</keyword>
<keyword id="KW-0346">Stress response</keyword>
<keyword id="KW-0862">Zinc</keyword>
<keyword id="KW-0863">Zinc-finger</keyword>
<reference key="1">
    <citation type="journal article" date="1992" name="Gene">
        <title>Mutational analysis of the Escherichia coli serB promoter region reveals transcriptional linkage to a downstream gene.</title>
        <authorList>
            <person name="Neuwald A.F."/>
            <person name="Berg D.E."/>
            <person name="Stauffer G.V."/>
        </authorList>
    </citation>
    <scope>NUCLEOTIDE SEQUENCE [GENOMIC DNA]</scope>
    <scope>DOMAIN</scope>
    <scope>DISRUPTION PHENOTYPE</scope>
    <scope>PUTATIVE ZINC FINGER</scope>
    <scope>OPERON</scope>
    <source>
        <strain>K12</strain>
    </source>
</reference>
<reference key="2">
    <citation type="journal article" date="1996" name="J. Bacteriol.">
        <title>Escherichia coli DNA repair genes radA and sms are the same gene.</title>
        <authorList>
            <person name="Song Y."/>
            <person name="Sargentini N.J."/>
        </authorList>
    </citation>
    <scope>NUCLEOTIDE SEQUENCE [GENOMIC DNA]</scope>
    <scope>DOMAIN</scope>
    <scope>MUTAGENESIS OF CYS-28</scope>
    <source>
        <strain>K12 / AB1157</strain>
    </source>
</reference>
<reference key="3">
    <citation type="journal article" date="1995" name="Nucleic Acids Res.">
        <title>Analysis of the Escherichia coli genome VI: DNA sequence of the region from 92.8 through 100 minutes.</title>
        <authorList>
            <person name="Burland V.D."/>
            <person name="Plunkett G. III"/>
            <person name="Sofia H.J."/>
            <person name="Daniels D.L."/>
            <person name="Blattner F.R."/>
        </authorList>
    </citation>
    <scope>NUCLEOTIDE SEQUENCE [LARGE SCALE GENOMIC DNA]</scope>
    <source>
        <strain>K12 / MG1655 / ATCC 47076</strain>
    </source>
</reference>
<reference key="4">
    <citation type="journal article" date="1997" name="Science">
        <title>The complete genome sequence of Escherichia coli K-12.</title>
        <authorList>
            <person name="Blattner F.R."/>
            <person name="Plunkett G. III"/>
            <person name="Bloch C.A."/>
            <person name="Perna N.T."/>
            <person name="Burland V."/>
            <person name="Riley M."/>
            <person name="Collado-Vides J."/>
            <person name="Glasner J.D."/>
            <person name="Rode C.K."/>
            <person name="Mayhew G.F."/>
            <person name="Gregor J."/>
            <person name="Davis N.W."/>
            <person name="Kirkpatrick H.A."/>
            <person name="Goeden M.A."/>
            <person name="Rose D.J."/>
            <person name="Mau B."/>
            <person name="Shao Y."/>
        </authorList>
    </citation>
    <scope>NUCLEOTIDE SEQUENCE [LARGE SCALE GENOMIC DNA]</scope>
    <source>
        <strain>K12 / MG1655 / ATCC 47076</strain>
    </source>
</reference>
<reference key="5">
    <citation type="journal article" date="2006" name="Mol. Syst. Biol.">
        <title>Highly accurate genome sequences of Escherichia coli K-12 strains MG1655 and W3110.</title>
        <authorList>
            <person name="Hayashi K."/>
            <person name="Morooka N."/>
            <person name="Yamamoto Y."/>
            <person name="Fujita K."/>
            <person name="Isono K."/>
            <person name="Choi S."/>
            <person name="Ohtsubo E."/>
            <person name="Baba T."/>
            <person name="Wanner B.L."/>
            <person name="Mori H."/>
            <person name="Horiuchi T."/>
        </authorList>
    </citation>
    <scope>NUCLEOTIDE SEQUENCE [LARGE SCALE GENOMIC DNA]</scope>
    <source>
        <strain>K12 / W3110 / ATCC 27325 / DSM 5911</strain>
    </source>
</reference>
<reference key="6">
    <citation type="journal article" date="1982" name="Int. J. Radiat. Biol. Relat. Stud. Phys. Chem. Med.">
        <title>A mutation (radA100) in Escherichia coli that selectively sensitizes cells grown in rich medium to x- or u.v.-radiation, or methyl methanesulphonate.</title>
        <authorList>
            <person name="Diver W.P."/>
            <person name="Sargentini N.J."/>
            <person name="Smith K.C."/>
        </authorList>
    </citation>
    <scope>ISOLATION OF RADA100 ALLELE</scope>
    <scope>MUTAGENESIS OF CYS-28</scope>
    <source>
        <strain>K12</strain>
    </source>
</reference>
<reference key="7">
    <citation type="journal article" date="2002" name="J. Bacteriol.">
        <title>Role for radA/sms in recombination intermediate processing in Escherichia coli.</title>
        <authorList>
            <person name="Beam C.E."/>
            <person name="Saveson C.J."/>
            <person name="Lovett S.T."/>
        </authorList>
    </citation>
    <scope>FUNCTION</scope>
    <scope>DISRUPTION PHENOTYPE</scope>
    <scope>MUTAGENESIS OF CYS-28</scope>
    <source>
        <strain>K12 / AB1157</strain>
    </source>
</reference>
<reference key="8">
    <citation type="journal article" date="2006" name="DNA Repair">
        <title>Replication arrest-stimulated recombination: Dependence on the RecA paralog, RadA/Sms and translesion polymerase, DinB.</title>
        <authorList>
            <person name="Lovett S.T."/>
        </authorList>
    </citation>
    <scope>FUNCTION</scope>
    <source>
        <strain>K12 / AB1157</strain>
    </source>
</reference>
<reference key="9">
    <citation type="journal article" date="2014" name="J. Bacteriol.">
        <title>Escherichia coli genes and pathways involved in surviving extreme exposure to ionizing radiation.</title>
        <authorList>
            <person name="Byrne R.T."/>
            <person name="Chen S.H."/>
            <person name="Wood E.A."/>
            <person name="Cabot E.L."/>
            <person name="Cox M.M."/>
        </authorList>
    </citation>
    <scope>DISRUPTION PHENOTYPE</scope>
    <source>
        <strain>K12 / MG1655 / ATCC 47076</strain>
    </source>
</reference>
<reference key="10">
    <citation type="journal article" date="2015" name="Mol. Microbiol.">
        <title>Escherichia coli radD (yejH) gene: a novel function involved in radiation resistance and double-strand break repair.</title>
        <authorList>
            <person name="Chen S.H."/>
            <person name="Byrne R.T."/>
            <person name="Wood E.A."/>
            <person name="Cox M.M."/>
        </authorList>
    </citation>
    <scope>FUNCTION</scope>
    <scope>DISRUPTION PHENOTYPE</scope>
</reference>
<reference key="11">
    <citation type="journal article" date="2015" name="Mol. Microbiol.">
        <title>Genetic analysis of Escherichia coli RadA: functional motifs and genetic interactions.</title>
        <authorList>
            <person name="Cooper D.L."/>
            <person name="Boyle D.C."/>
            <person name="Lovett S.T."/>
        </authorList>
    </citation>
    <scope>FUNCTION</scope>
    <scope>DOMAIN</scope>
    <scope>DISRUPTION PHENOTYPE</scope>
    <scope>MUTAGENESIS OF CYS-28; LYS-108; 228-LEU--LEU-460; LYS-258; 275-GLN--LEU-460 AND SER-372</scope>
    <source>
        <strain>K12 / AB1157</strain>
    </source>
</reference>
<reference key="12">
    <citation type="journal article" date="2016" name="Elife">
        <title>Recombinational branch migration by the RadA/Sms paralog of RecA in Escherichia coli.</title>
        <authorList>
            <person name="Cooper D.L."/>
            <person name="Lovett S.T."/>
        </authorList>
    </citation>
    <scope>FUNCTION</scope>
    <scope>ATPASE ACTIVITY</scope>
    <scope>SSDNA-BINDING</scope>
    <scope>MUTAGENESIS OF CYS-28; LYS-108; LYS-258 AND SER-372</scope>
</reference>
<gene>
    <name evidence="1 13" type="primary">radA</name>
    <name evidence="11" type="synonym">sms</name>
    <name type="ordered locus">b4389</name>
    <name type="ordered locus">JW4352</name>
</gene>
<dbReference type="EC" id="3.6.4.-" evidence="8"/>
<dbReference type="EMBL" id="X63155">
    <property type="protein sequence ID" value="CAA44856.1"/>
    <property type="molecule type" value="Genomic_DNA"/>
</dbReference>
<dbReference type="EMBL" id="U59449">
    <property type="protein sequence ID" value="AAC44380.1"/>
    <property type="molecule type" value="Genomic_DNA"/>
</dbReference>
<dbReference type="EMBL" id="U14003">
    <property type="protein sequence ID" value="AAA97285.1"/>
    <property type="molecule type" value="Genomic_DNA"/>
</dbReference>
<dbReference type="EMBL" id="U00096">
    <property type="protein sequence ID" value="AAC77342.1"/>
    <property type="molecule type" value="Genomic_DNA"/>
</dbReference>
<dbReference type="EMBL" id="AP009048">
    <property type="protein sequence ID" value="BAE78378.1"/>
    <property type="molecule type" value="Genomic_DNA"/>
</dbReference>
<dbReference type="PIR" id="JC1417">
    <property type="entry name" value="JC1417"/>
</dbReference>
<dbReference type="RefSeq" id="NP_418806.1">
    <property type="nucleotide sequence ID" value="NC_000913.3"/>
</dbReference>
<dbReference type="RefSeq" id="WP_001029687.1">
    <property type="nucleotide sequence ID" value="NZ_LN832404.1"/>
</dbReference>
<dbReference type="SMR" id="P24554"/>
<dbReference type="BioGRID" id="4262780">
    <property type="interactions" value="174"/>
</dbReference>
<dbReference type="BioGRID" id="853189">
    <property type="interactions" value="1"/>
</dbReference>
<dbReference type="DIP" id="DIP-10635N"/>
<dbReference type="FunCoup" id="P24554">
    <property type="interactions" value="447"/>
</dbReference>
<dbReference type="IntAct" id="P24554">
    <property type="interactions" value="5"/>
</dbReference>
<dbReference type="STRING" id="511145.b4389"/>
<dbReference type="MEROPS" id="S16.A04"/>
<dbReference type="jPOST" id="P24554"/>
<dbReference type="PaxDb" id="511145-b4389"/>
<dbReference type="EnsemblBacteria" id="AAC77342">
    <property type="protein sequence ID" value="AAC77342"/>
    <property type="gene ID" value="b4389"/>
</dbReference>
<dbReference type="GeneID" id="948912"/>
<dbReference type="KEGG" id="ecj:JW4352"/>
<dbReference type="KEGG" id="eco:b4389"/>
<dbReference type="KEGG" id="ecoc:C3026_23715"/>
<dbReference type="PATRIC" id="fig|1411691.4.peg.2296"/>
<dbReference type="EchoBASE" id="EB1273"/>
<dbReference type="eggNOG" id="COG1066">
    <property type="taxonomic scope" value="Bacteria"/>
</dbReference>
<dbReference type="HOGENOM" id="CLU_018264_0_1_6"/>
<dbReference type="InParanoid" id="P24554"/>
<dbReference type="OMA" id="CPECQAW"/>
<dbReference type="OrthoDB" id="9803906at2"/>
<dbReference type="PhylomeDB" id="P24554"/>
<dbReference type="BioCyc" id="EcoCyc:EG11296-MONOMER"/>
<dbReference type="BRENDA" id="3.6.4.B7">
    <property type="organism ID" value="2026"/>
</dbReference>
<dbReference type="PRO" id="PR:P24554"/>
<dbReference type="Proteomes" id="UP000000625">
    <property type="component" value="Chromosome"/>
</dbReference>
<dbReference type="GO" id="GO:0005524">
    <property type="term" value="F:ATP binding"/>
    <property type="evidence" value="ECO:0007669"/>
    <property type="project" value="UniProtKB-UniRule"/>
</dbReference>
<dbReference type="GO" id="GO:0016887">
    <property type="term" value="F:ATP hydrolysis activity"/>
    <property type="evidence" value="ECO:0007669"/>
    <property type="project" value="InterPro"/>
</dbReference>
<dbReference type="GO" id="GO:0008094">
    <property type="term" value="F:ATP-dependent activity, acting on DNA"/>
    <property type="evidence" value="ECO:0000314"/>
    <property type="project" value="EcoCyc"/>
</dbReference>
<dbReference type="GO" id="GO:0140664">
    <property type="term" value="F:ATP-dependent DNA damage sensor activity"/>
    <property type="evidence" value="ECO:0007669"/>
    <property type="project" value="InterPro"/>
</dbReference>
<dbReference type="GO" id="GO:0003684">
    <property type="term" value="F:damaged DNA binding"/>
    <property type="evidence" value="ECO:0007669"/>
    <property type="project" value="InterPro"/>
</dbReference>
<dbReference type="GO" id="GO:0003697">
    <property type="term" value="F:single-stranded DNA binding"/>
    <property type="evidence" value="ECO:0000314"/>
    <property type="project" value="EcoCyc"/>
</dbReference>
<dbReference type="GO" id="GO:0008270">
    <property type="term" value="F:zinc ion binding"/>
    <property type="evidence" value="ECO:0007669"/>
    <property type="project" value="UniProtKB-KW"/>
</dbReference>
<dbReference type="GO" id="GO:0006281">
    <property type="term" value="P:DNA repair"/>
    <property type="evidence" value="ECO:0000315"/>
    <property type="project" value="EcoCyc"/>
</dbReference>
<dbReference type="GO" id="GO:0000725">
    <property type="term" value="P:recombinational repair"/>
    <property type="evidence" value="ECO:0000314"/>
    <property type="project" value="EcoCyc"/>
</dbReference>
<dbReference type="GO" id="GO:0009314">
    <property type="term" value="P:response to radiation"/>
    <property type="evidence" value="ECO:0000315"/>
    <property type="project" value="EcoCyc"/>
</dbReference>
<dbReference type="CDD" id="cd01121">
    <property type="entry name" value="RadA_SMS_N"/>
    <property type="match status" value="1"/>
</dbReference>
<dbReference type="FunFam" id="3.30.230.10:FF:000011">
    <property type="entry name" value="DNA repair protein RadA"/>
    <property type="match status" value="1"/>
</dbReference>
<dbReference type="FunFam" id="3.40.50.300:FF:000050">
    <property type="entry name" value="DNA repair protein RadA"/>
    <property type="match status" value="1"/>
</dbReference>
<dbReference type="Gene3D" id="3.30.230.10">
    <property type="match status" value="1"/>
</dbReference>
<dbReference type="Gene3D" id="3.40.50.300">
    <property type="entry name" value="P-loop containing nucleotide triphosphate hydrolases"/>
    <property type="match status" value="1"/>
</dbReference>
<dbReference type="HAMAP" id="MF_01498">
    <property type="entry name" value="RadA_bact"/>
    <property type="match status" value="1"/>
</dbReference>
<dbReference type="InterPro" id="IPR003593">
    <property type="entry name" value="AAA+_ATPase"/>
</dbReference>
<dbReference type="InterPro" id="IPR004504">
    <property type="entry name" value="DNA_repair_RadA"/>
</dbReference>
<dbReference type="InterPro" id="IPR027417">
    <property type="entry name" value="P-loop_NTPase"/>
</dbReference>
<dbReference type="InterPro" id="IPR020588">
    <property type="entry name" value="RecA_ATP-bd"/>
</dbReference>
<dbReference type="InterPro" id="IPR020568">
    <property type="entry name" value="Ribosomal_Su5_D2-typ_SF"/>
</dbReference>
<dbReference type="InterPro" id="IPR014721">
    <property type="entry name" value="Ribsml_uS5_D2-typ_fold_subgr"/>
</dbReference>
<dbReference type="InterPro" id="IPR041166">
    <property type="entry name" value="Rubredoxin_2"/>
</dbReference>
<dbReference type="NCBIfam" id="TIGR00416">
    <property type="entry name" value="sms"/>
    <property type="match status" value="1"/>
</dbReference>
<dbReference type="PANTHER" id="PTHR32472">
    <property type="entry name" value="DNA REPAIR PROTEIN RADA"/>
    <property type="match status" value="1"/>
</dbReference>
<dbReference type="PANTHER" id="PTHR32472:SF10">
    <property type="entry name" value="DNA REPAIR PROTEIN RADA-LIKE PROTEIN"/>
    <property type="match status" value="1"/>
</dbReference>
<dbReference type="Pfam" id="PF13481">
    <property type="entry name" value="AAA_25"/>
    <property type="match status" value="1"/>
</dbReference>
<dbReference type="Pfam" id="PF13541">
    <property type="entry name" value="ChlI"/>
    <property type="match status" value="1"/>
</dbReference>
<dbReference type="Pfam" id="PF18073">
    <property type="entry name" value="Zn_ribbon_LapB"/>
    <property type="match status" value="1"/>
</dbReference>
<dbReference type="PRINTS" id="PR01874">
    <property type="entry name" value="DNAREPAIRADA"/>
</dbReference>
<dbReference type="SMART" id="SM00382">
    <property type="entry name" value="AAA"/>
    <property type="match status" value="1"/>
</dbReference>
<dbReference type="SUPFAM" id="SSF52540">
    <property type="entry name" value="P-loop containing nucleoside triphosphate hydrolases"/>
    <property type="match status" value="1"/>
</dbReference>
<dbReference type="SUPFAM" id="SSF54211">
    <property type="entry name" value="Ribosomal protein S5 domain 2-like"/>
    <property type="match status" value="1"/>
</dbReference>
<dbReference type="PROSITE" id="PS50162">
    <property type="entry name" value="RECA_2"/>
    <property type="match status" value="1"/>
</dbReference>
<evidence type="ECO:0000255" key="1">
    <source>
        <dbReference type="HAMAP-Rule" id="MF_01498"/>
    </source>
</evidence>
<evidence type="ECO:0000269" key="2">
    <source>
    </source>
</evidence>
<evidence type="ECO:0000269" key="3">
    <source>
    </source>
</evidence>
<evidence type="ECO:0000269" key="4">
    <source>
    </source>
</evidence>
<evidence type="ECO:0000269" key="5">
    <source>
    </source>
</evidence>
<evidence type="ECO:0000269" key="6">
    <source>
    </source>
</evidence>
<evidence type="ECO:0000269" key="7">
    <source>
    </source>
</evidence>
<evidence type="ECO:0000269" key="8">
    <source>
    </source>
</evidence>
<evidence type="ECO:0000269" key="9">
    <source>
    </source>
</evidence>
<evidence type="ECO:0000269" key="10">
    <source>
    </source>
</evidence>
<evidence type="ECO:0000303" key="11">
    <source>
    </source>
</evidence>
<evidence type="ECO:0000303" key="12">
    <source>
    </source>
</evidence>
<evidence type="ECO:0000303" key="13">
    <source>
    </source>
</evidence>
<evidence type="ECO:0000305" key="14">
    <source>
    </source>
</evidence>
<evidence type="ECO:0000305" key="15">
    <source>
    </source>
</evidence>
<sequence>MAKAPKRAFVCNECGADYPRWQGQCSACHAWNTITEVRLAASPMVARNERLSGYAGSAGVAKVQKLSDISLEELPRFSTGFKEFDRVLGGGVVPGSAILIGGNPGAGKSTLLLQTLCKLAQQMKTLYVTGEESLQQVAMRAHRLGLPTDNLNMLSETSIEQICLIAEEEQPKLMVIDSIQVMHMADVQSSPGSVAQVRETAAYLTRFAKTRGVAIVMVGHVTKDGSLAGPKVLEHCIDCSVLLDGDADSRFRTLRSHKNRFGAVNELGVFAMTEQGLREVSNPSAIFLSRGDEVTSGSSVMVVWEGTRPLLVEIQALVDHSMMANPRRVAVGLEQNRLAILLAVLHRHGGLQMADQDVFVNVVGGVKVTETSADLALLLAMVSSLRDRPLPQDLVVFGEVGLAGEIRPVPSGQERISEAAKHGFRRAIVPAANVPKKAPEGMQIFGVKKLSDALSVFDDL</sequence>
<accession>P24554</accession>
<accession>Q2M5S8</accession>
<organism>
    <name type="scientific">Escherichia coli (strain K12)</name>
    <dbReference type="NCBI Taxonomy" id="83333"/>
    <lineage>
        <taxon>Bacteria</taxon>
        <taxon>Pseudomonadati</taxon>
        <taxon>Pseudomonadota</taxon>
        <taxon>Gammaproteobacteria</taxon>
        <taxon>Enterobacterales</taxon>
        <taxon>Enterobacteriaceae</taxon>
        <taxon>Escherichia</taxon>
    </lineage>
</organism>
<proteinExistence type="evidence at protein level"/>
<comment type="function">
    <text evidence="2 4 6 7 8">DNA-dependent ATPase involved in processing of recombination intermediates, plays a role in repairing DNA breaks. Stimulates the branch migration of RecA-mediated strand transfer reactions, allowing the 3' invading strand to extend heteroduplex DNA faster. Binds ssDNA in the presence of ADP but not other nucleotides, has ATPase activity that is stimulated by ssDNA and various branched DNA structures, but inhibited by SSB. Does not have RecA's homology-searching function (PubMed:26845522). Genetic experiments involving combination of radA mutations with mutations in recA, recB, recG, recJ, recQ, ruvA and ruvC show it plays a role in recombination and recombinational repair, probably involving stabilizing or processing branched DNA or blocked replication forks. Is genetically synergistic to RecG and RuvABC (PubMed:12446634, PubMed:25484163). May be involved in recovery of genetic rearrangements during replication fork breakdown (PubMed:16904387). In combination with RadD is important in recovery from double-strand DNA breaks (DSB) (PubMed:25425430).</text>
</comment>
<comment type="induction">
    <text evidence="3">Part of the serB-radA operon (PubMed:1327967).</text>
</comment>
<comment type="domain">
    <text evidence="1 7 14 15">Has a putative N-terminal zinc-finger, a region with homology to RecA with ATPase motifs including the RadA KNRFG motif (approximately residues 60-290), while the C-terminus is homologous to Lon protease (from about residue 290 to the end, the ribosomal S5 domain). In this organism the Lon protease active site Ser-372 is conserved, but not all other bacteria encode Ser at this position (PubMed:1327967, PubMed:8759876). Mutation of Ser-372 has no discernible effect on RadA function, suggesting RadA is not a protease (PubMed:25484163).</text>
</comment>
<comment type="disruption phenotype">
    <text evidence="2 3 5 6 7">Increased sensitivity to methyl methanesulfonate, mitomycin C, phleomycin (PubMed:12446634, PubMed:1327967). Has a modest defect in RecA-mediated conjugational DNA recombination; double radA-radD mutants have wild-type levels (PubMed:12446634, PubMed:25425430). 10- to 1000-fold decrease in survival after ionising irradiation (IR) (PubMed:25049088, PubMed:25425430). Double radA-radD deletions have nearly 10(6)-fold lower survival against IR and the double mutant is more severely affected by UV radiation than either of the single mutants alone. The single mutation is more sensitive to dsDNA breaks induced by ciprofloxacin (CFX), the double radA-radD mutant is inviable upon CFX treatment; the SOS response is slightly induced in the single and more induced in the double mutant (PubMed:25425430). Another group showed very slight sensitivity to CFX, UV and azidothymidine (AZT) in single deletion mutants, a radA-recG deletion is extremely sensitive to CFX and AZT, less so to UV. The SOS response is induced in the radA-recG double mutant, indicating spontaneous DNA damage. AZT sensitivity is suppressed by further recA or recF deletions, suggesting AZT-induced DNA gaps are processed into lethal intermediates in a RecA-dependent fashion mediated by RecF. RuvAB suppresses UV, CFX and AZT sensitivity to vaarying degrees. Similarly, radA-uvrD double deletions are also more sensitive to UV, CFX and AZT. Adding a recF mutation almost completely suppresses AZT and partially suppresses UV and CFX sensitivity, suggesting RadA processes a class of intermediates that accumulates in uvrD mutants (PubMed:25484163).</text>
</comment>
<comment type="similarity">
    <text evidence="1">Belongs to the RecA family. RadA subfamily.</text>
</comment>
<feature type="chain" id="PRO_0000187926" description="DNA repair protein RadA">
    <location>
        <begin position="1"/>
        <end position="460"/>
    </location>
</feature>
<feature type="zinc finger region" description="C4-type" evidence="1 14">
    <location>
        <begin position="11"/>
        <end position="28"/>
    </location>
</feature>
<feature type="region of interest" description="Lon-protease-like" evidence="1 14">
    <location>
        <begin position="357"/>
        <end position="460"/>
    </location>
</feature>
<feature type="short sequence motif" description="RadA KNRFG motif" evidence="1 15">
    <location>
        <begin position="258"/>
        <end position="262"/>
    </location>
</feature>
<feature type="binding site" evidence="1 14">
    <location>
        <begin position="102"/>
        <end position="109"/>
    </location>
    <ligand>
        <name>ATP</name>
        <dbReference type="ChEBI" id="CHEBI:30616"/>
    </ligand>
</feature>
<feature type="mutagenesis site" description="In radA100; rich medium-grown cells are sensitive to gamma, X-ray and UV radiation as well as methyl methanesulfonate and hydroxyurea, impaired in repair of dsDNA breaks. Decreased resistance to ciprofloxacin (CFX)." evidence="2 7 9 10">
    <original>C</original>
    <variation>Y</variation>
    <location>
        <position position="28"/>
    </location>
</feature>
<feature type="mutagenesis site" description="Decreased resistance to CFX, semi-dominant to wild-type." evidence="7">
    <original>K</original>
    <variation>R</variation>
    <location>
        <position position="108"/>
    </location>
</feature>
<feature type="mutagenesis site" description="Decreased resistance to CFX." evidence="7">
    <location>
        <begin position="228"/>
        <end position="460"/>
    </location>
</feature>
<feature type="mutagenesis site" description="Decreased resistance to CFX, semi-dominant to wild-type." evidence="7">
    <original>K</original>
    <variation>R</variation>
    <location>
        <position position="258"/>
    </location>
</feature>
<feature type="mutagenesis site" description="Decreased resistance to CFX." evidence="7">
    <location>
        <begin position="275"/>
        <end position="460"/>
    </location>
</feature>
<feature type="mutagenesis site" description="Wild-type resistance to CFX; equivalent to the active site Ser of Lon protease." evidence="7">
    <original>S</original>
    <variation>A</variation>
    <location>
        <position position="372"/>
    </location>
</feature>
<name>RADA_ECOLI</name>
<protein>
    <recommendedName>
        <fullName evidence="1 13">DNA repair protein RadA</fullName>
        <ecNumber evidence="8">3.6.4.-</ecNumber>
    </recommendedName>
    <alternativeName>
        <fullName evidence="12">Branch migration protein RadA</fullName>
    </alternativeName>
    <alternativeName>
        <fullName evidence="11">DNA repair protein Sms</fullName>
    </alternativeName>
</protein>